<keyword id="KW-0328">Glycosyltransferase</keyword>
<keyword id="KW-1185">Reference proteome</keyword>
<keyword id="KW-0808">Transferase</keyword>
<evidence type="ECO:0000250" key="1"/>
<evidence type="ECO:0000256" key="2">
    <source>
        <dbReference type="SAM" id="MobiDB-lite"/>
    </source>
</evidence>
<evidence type="ECO:0000269" key="3">
    <source>
    </source>
</evidence>
<evidence type="ECO:0000269" key="4">
    <source>
    </source>
</evidence>
<evidence type="ECO:0000305" key="5"/>
<protein>
    <recommendedName>
        <fullName>UDP-glycosyltransferase 73C6</fullName>
        <ecNumber>2.4.1.-</ecNumber>
    </recommendedName>
    <alternativeName>
        <fullName>Flavonol-3-O-glycoside-7-O-glucosyltransferase 1</fullName>
    </alternativeName>
    <alternativeName>
        <fullName>Zeatin O-glucosyltransferase 2</fullName>
    </alternativeName>
</protein>
<feature type="chain" id="PRO_0000074158" description="UDP-glycosyltransferase 73C6">
    <location>
        <begin position="1"/>
        <end position="495"/>
    </location>
</feature>
<feature type="region of interest" description="Disordered" evidence="2">
    <location>
        <begin position="449"/>
        <end position="475"/>
    </location>
</feature>
<feature type="compositionally biased region" description="Basic and acidic residues" evidence="2">
    <location>
        <begin position="450"/>
        <end position="471"/>
    </location>
</feature>
<feature type="binding site" evidence="1">
    <location>
        <position position="296"/>
    </location>
    <ligand>
        <name>UDP-alpha-D-glucose</name>
        <dbReference type="ChEBI" id="CHEBI:58885"/>
    </ligand>
</feature>
<feature type="binding site" evidence="1">
    <location>
        <begin position="356"/>
        <end position="358"/>
    </location>
    <ligand>
        <name>UDP-alpha-D-glucose</name>
        <dbReference type="ChEBI" id="CHEBI:58885"/>
    </ligand>
</feature>
<feature type="binding site" evidence="1">
    <location>
        <begin position="373"/>
        <end position="381"/>
    </location>
    <ligand>
        <name>UDP-alpha-D-glucose</name>
        <dbReference type="ChEBI" id="CHEBI:58885"/>
    </ligand>
</feature>
<feature type="binding site" evidence="1">
    <location>
        <begin position="395"/>
        <end position="398"/>
    </location>
    <ligand>
        <name>UDP-alpha-D-glucose</name>
        <dbReference type="ChEBI" id="CHEBI:58885"/>
    </ligand>
</feature>
<feature type="sequence conflict" description="In Ref. 4; BAC42195." evidence="5" ref="4">
    <original>A</original>
    <variation>T</variation>
    <location>
        <position position="61"/>
    </location>
</feature>
<sequence length="495" mass="55929">MAFEKNNEPFPLHFVLFPFMAQGHMIPMVDIARLLAQRGVLITIVTTPHNAARFKNVLNRAIESGLPINLVQVKFPYQEAGLQEGQENMDLLTTMEQITSFFKAVNLLKEPVQNLIEEMSPRPSCLISDMCLSYTSEIAKKFKIPKILFHGMGCFCLLCVNVLRKNREILDNLKSDKEYFIVPYFPDRVEFTRPQVPVETYVPAGWKEILEDMVEADKTSYGVIVNSFQELEPAYAKDFKEARSGKAWTIGPVSLCNKVGVDKAERGNKSDIDQDECLEWLDSKEPGSVLYVCLGSICNLPLSQLLELGLGLEESQRPFIWVIRGWEKYKELVEWFSESGFEDRIQDRGLLIKGWSPQMLILSHPSVGGFLTHCGWNSTLEGITAGLPMLTWPLFADQFCNEKLVVQILKVGVSAEVKEVMKWGEEEKIGVLVDKEGVKKAVEELMGESDDAKERRRRAKELGESAHKAVEEGGSSHSNITFLLQDIMQLAQSNN</sequence>
<organism>
    <name type="scientific">Arabidopsis thaliana</name>
    <name type="common">Mouse-ear cress</name>
    <dbReference type="NCBI Taxonomy" id="3702"/>
    <lineage>
        <taxon>Eukaryota</taxon>
        <taxon>Viridiplantae</taxon>
        <taxon>Streptophyta</taxon>
        <taxon>Embryophyta</taxon>
        <taxon>Tracheophyta</taxon>
        <taxon>Spermatophyta</taxon>
        <taxon>Magnoliopsida</taxon>
        <taxon>eudicotyledons</taxon>
        <taxon>Gunneridae</taxon>
        <taxon>Pentapetalae</taxon>
        <taxon>rosids</taxon>
        <taxon>malvids</taxon>
        <taxon>Brassicales</taxon>
        <taxon>Brassicaceae</taxon>
        <taxon>Camelineae</taxon>
        <taxon>Arabidopsis</taxon>
    </lineage>
</organism>
<comment type="function">
    <text evidence="3 4">Acts as a UDP-glucose:flavonol-3-O-glycoside-7-O-glucosyltransferase. 6- and 7-hydroxyflavone, but not 3- or 5-hydroxyflavone are accepted as substrates. Possesses low quercetin 3-O-glucosyltransferase, 7-O-glucosyltransferase and 4'-O-glucosyltransferase activities in vitro.</text>
</comment>
<comment type="tissue specificity">
    <text evidence="3">Expressed in leaves and flowers, and at a very low level in roots.</text>
</comment>
<comment type="similarity">
    <text evidence="5">Belongs to the UDP-glycosyltransferase family.</text>
</comment>
<comment type="caution">
    <text evidence="5">Was originally (Ref.1) thought to be a zeatin O-glucosyltransferases and was named ZOG2.</text>
</comment>
<accession>Q9ZQ95</accession>
<accession>Q8GYL0</accession>
<reference key="1">
    <citation type="submission" date="2004-03" db="EMBL/GenBank/DDBJ databases">
        <title>Arabidopsis genes encoding zeatin O-glucosyltransferases.</title>
        <authorList>
            <person name="Martin R.C."/>
            <person name="Mok M.C."/>
            <person name="Mok D.W.S."/>
        </authorList>
    </citation>
    <scope>NUCLEOTIDE SEQUENCE [GENOMIC DNA]</scope>
</reference>
<reference key="2">
    <citation type="journal article" date="1999" name="Nature">
        <title>Sequence and analysis of chromosome 2 of the plant Arabidopsis thaliana.</title>
        <authorList>
            <person name="Lin X."/>
            <person name="Kaul S."/>
            <person name="Rounsley S.D."/>
            <person name="Shea T.P."/>
            <person name="Benito M.-I."/>
            <person name="Town C.D."/>
            <person name="Fujii C.Y."/>
            <person name="Mason T.M."/>
            <person name="Bowman C.L."/>
            <person name="Barnstead M.E."/>
            <person name="Feldblyum T.V."/>
            <person name="Buell C.R."/>
            <person name="Ketchum K.A."/>
            <person name="Lee J.J."/>
            <person name="Ronning C.M."/>
            <person name="Koo H.L."/>
            <person name="Moffat K.S."/>
            <person name="Cronin L.A."/>
            <person name="Shen M."/>
            <person name="Pai G."/>
            <person name="Van Aken S."/>
            <person name="Umayam L."/>
            <person name="Tallon L.J."/>
            <person name="Gill J.E."/>
            <person name="Adams M.D."/>
            <person name="Carrera A.J."/>
            <person name="Creasy T.H."/>
            <person name="Goodman H.M."/>
            <person name="Somerville C.R."/>
            <person name="Copenhaver G.P."/>
            <person name="Preuss D."/>
            <person name="Nierman W.C."/>
            <person name="White O."/>
            <person name="Eisen J.A."/>
            <person name="Salzberg S.L."/>
            <person name="Fraser C.M."/>
            <person name="Venter J.C."/>
        </authorList>
    </citation>
    <scope>NUCLEOTIDE SEQUENCE [LARGE SCALE GENOMIC DNA]</scope>
    <source>
        <strain>cv. Columbia</strain>
    </source>
</reference>
<reference key="3">
    <citation type="journal article" date="2017" name="Plant J.">
        <title>Araport11: a complete reannotation of the Arabidopsis thaliana reference genome.</title>
        <authorList>
            <person name="Cheng C.Y."/>
            <person name="Krishnakumar V."/>
            <person name="Chan A.P."/>
            <person name="Thibaud-Nissen F."/>
            <person name="Schobel S."/>
            <person name="Town C.D."/>
        </authorList>
    </citation>
    <scope>GENOME REANNOTATION</scope>
    <source>
        <strain>cv. Columbia</strain>
    </source>
</reference>
<reference key="4">
    <citation type="journal article" date="2002" name="Science">
        <title>Functional annotation of a full-length Arabidopsis cDNA collection.</title>
        <authorList>
            <person name="Seki M."/>
            <person name="Narusaka M."/>
            <person name="Kamiya A."/>
            <person name="Ishida J."/>
            <person name="Satou M."/>
            <person name="Sakurai T."/>
            <person name="Nakajima M."/>
            <person name="Enju A."/>
            <person name="Akiyama K."/>
            <person name="Oono Y."/>
            <person name="Muramatsu M."/>
            <person name="Hayashizaki Y."/>
            <person name="Kawai J."/>
            <person name="Carninci P."/>
            <person name="Itoh M."/>
            <person name="Ishii Y."/>
            <person name="Arakawa T."/>
            <person name="Shibata K."/>
            <person name="Shinagawa A."/>
            <person name="Shinozaki K."/>
        </authorList>
    </citation>
    <scope>NUCLEOTIDE SEQUENCE [LARGE SCALE MRNA]</scope>
    <source>
        <strain>cv. Columbia</strain>
    </source>
</reference>
<reference key="5">
    <citation type="journal article" date="2001" name="J. Biol. Chem.">
        <title>Phylogenetic analysis of the UDP-glycosyltransferase multigene family of Arabidopsis thaliana.</title>
        <authorList>
            <person name="Li Y."/>
            <person name="Baldauf S."/>
            <person name="Lim E.K."/>
            <person name="Bowles D.J."/>
        </authorList>
    </citation>
    <scope>GENE FAMILY</scope>
</reference>
<reference key="6">
    <citation type="journal article" date="2003" name="J. Biol. Chem.">
        <title>UGT73C6 and UGT78D1, glycosyltransferases involved in flavonol glycoside biosynthesis in Arabidopsis thaliana.</title>
        <authorList>
            <person name="Jones P."/>
            <person name="Messner B."/>
            <person name="Nakajima J."/>
            <person name="Schaffner A.R."/>
            <person name="Saito K."/>
        </authorList>
    </citation>
    <scope>FUNCTION</scope>
    <scope>TISSUE SPECIFICITY</scope>
</reference>
<reference key="7">
    <citation type="journal article" date="2004" name="Biotechnol. Bioeng.">
        <title>Arabidopsis glycosyltransferases as biocatalysts in fermentation for regioselective synthesis of diverse quercetin glucosides.</title>
        <authorList>
            <person name="Lim E.K."/>
            <person name="Ashford D.A."/>
            <person name="Hou B."/>
            <person name="Jackson R.G."/>
            <person name="Bowles D.J."/>
        </authorList>
    </citation>
    <scope>FUNCTION</scope>
</reference>
<reference key="8">
    <citation type="journal article" date="2013" name="Plant Physiol. Biochem.">
        <title>The flavonoid biosynthetic pathway in Arabidopsis: Structural and genetic diversity.</title>
        <authorList>
            <person name="Saito K."/>
            <person name="Yonekura-Sakakibara K."/>
            <person name="Nakabayashi R."/>
            <person name="Higashi Y."/>
            <person name="Yamazaki M."/>
            <person name="Tohge T."/>
            <person name="Fernie A.R."/>
        </authorList>
    </citation>
    <scope>REVIEW</scope>
    <scope>NOMENCLATURE</scope>
</reference>
<name>U73C6_ARATH</name>
<proteinExistence type="evidence at transcript level"/>
<dbReference type="EC" id="2.4.1.-"/>
<dbReference type="EMBL" id="AY573821">
    <property type="protein sequence ID" value="AAS87591.1"/>
    <property type="molecule type" value="Genomic_DNA"/>
</dbReference>
<dbReference type="EMBL" id="AC006282">
    <property type="protein sequence ID" value="AAD20155.1"/>
    <property type="molecule type" value="Genomic_DNA"/>
</dbReference>
<dbReference type="EMBL" id="CP002685">
    <property type="protein sequence ID" value="AEC09298.1"/>
    <property type="molecule type" value="Genomic_DNA"/>
</dbReference>
<dbReference type="EMBL" id="AK117534">
    <property type="protein sequence ID" value="BAC42195.1"/>
    <property type="molecule type" value="mRNA"/>
</dbReference>
<dbReference type="PIR" id="G84784">
    <property type="entry name" value="G84784"/>
</dbReference>
<dbReference type="RefSeq" id="NP_181217.1">
    <property type="nucleotide sequence ID" value="NM_129234.2"/>
</dbReference>
<dbReference type="SMR" id="Q9ZQ95"/>
<dbReference type="FunCoup" id="Q9ZQ95">
    <property type="interactions" value="149"/>
</dbReference>
<dbReference type="STRING" id="3702.Q9ZQ95"/>
<dbReference type="CAZy" id="GT1">
    <property type="family name" value="Glycosyltransferase Family 1"/>
</dbReference>
<dbReference type="PaxDb" id="3702-AT2G36790.1"/>
<dbReference type="ProteomicsDB" id="228615"/>
<dbReference type="EnsemblPlants" id="AT2G36790.1">
    <property type="protein sequence ID" value="AT2G36790.1"/>
    <property type="gene ID" value="AT2G36790"/>
</dbReference>
<dbReference type="GeneID" id="818251"/>
<dbReference type="Gramene" id="AT2G36790.1">
    <property type="protein sequence ID" value="AT2G36790.1"/>
    <property type="gene ID" value="AT2G36790"/>
</dbReference>
<dbReference type="KEGG" id="ath:AT2G36790"/>
<dbReference type="Araport" id="AT2G36790"/>
<dbReference type="TAIR" id="AT2G36790">
    <property type="gene designation" value="UGT73C6"/>
</dbReference>
<dbReference type="eggNOG" id="KOG1192">
    <property type="taxonomic scope" value="Eukaryota"/>
</dbReference>
<dbReference type="HOGENOM" id="CLU_001724_2_2_1"/>
<dbReference type="InParanoid" id="Q9ZQ95"/>
<dbReference type="OMA" id="MCLHYTA"/>
<dbReference type="PhylomeDB" id="Q9ZQ95"/>
<dbReference type="PRO" id="PR:Q9ZQ95"/>
<dbReference type="Proteomes" id="UP000006548">
    <property type="component" value="Chromosome 2"/>
</dbReference>
<dbReference type="ExpressionAtlas" id="Q9ZQ95">
    <property type="expression patterns" value="baseline"/>
</dbReference>
<dbReference type="GO" id="GO:0005783">
    <property type="term" value="C:endoplasmic reticulum"/>
    <property type="evidence" value="ECO:0007005"/>
    <property type="project" value="TAIR"/>
</dbReference>
<dbReference type="GO" id="GO:0080043">
    <property type="term" value="F:quercetin 3-O-glucosyltransferase activity"/>
    <property type="evidence" value="ECO:0000314"/>
    <property type="project" value="TAIR"/>
</dbReference>
<dbReference type="GO" id="GO:0080046">
    <property type="term" value="F:quercetin 4'-O-glucosyltransferase activity"/>
    <property type="evidence" value="ECO:0000314"/>
    <property type="project" value="TAIR"/>
</dbReference>
<dbReference type="GO" id="GO:0080044">
    <property type="term" value="F:quercetin 7-O-glucosyltransferase activity"/>
    <property type="evidence" value="ECO:0000314"/>
    <property type="project" value="TAIR"/>
</dbReference>
<dbReference type="GO" id="GO:0035251">
    <property type="term" value="F:UDP-glucosyltransferase activity"/>
    <property type="evidence" value="ECO:0000314"/>
    <property type="project" value="TAIR"/>
</dbReference>
<dbReference type="GO" id="GO:0051555">
    <property type="term" value="P:flavonol biosynthetic process"/>
    <property type="evidence" value="ECO:0000314"/>
    <property type="project" value="TAIR"/>
</dbReference>
<dbReference type="CDD" id="cd03784">
    <property type="entry name" value="GT1_Gtf-like"/>
    <property type="match status" value="1"/>
</dbReference>
<dbReference type="FunFam" id="3.40.50.2000:FF:000047">
    <property type="entry name" value="Glycosyltransferase"/>
    <property type="match status" value="1"/>
</dbReference>
<dbReference type="FunFam" id="3.40.50.2000:FF:000071">
    <property type="entry name" value="Glycosyltransferase"/>
    <property type="match status" value="1"/>
</dbReference>
<dbReference type="Gene3D" id="3.40.50.2000">
    <property type="entry name" value="Glycogen Phosphorylase B"/>
    <property type="match status" value="2"/>
</dbReference>
<dbReference type="InterPro" id="IPR002213">
    <property type="entry name" value="UDP_glucos_trans"/>
</dbReference>
<dbReference type="InterPro" id="IPR035595">
    <property type="entry name" value="UDP_glycos_trans_CS"/>
</dbReference>
<dbReference type="PANTHER" id="PTHR48047">
    <property type="entry name" value="GLYCOSYLTRANSFERASE"/>
    <property type="match status" value="1"/>
</dbReference>
<dbReference type="PANTHER" id="PTHR48047:SF153">
    <property type="entry name" value="UDP-GLYCOSYLTRANSFERASE 73C5-RELATED"/>
    <property type="match status" value="1"/>
</dbReference>
<dbReference type="Pfam" id="PF00201">
    <property type="entry name" value="UDPGT"/>
    <property type="match status" value="1"/>
</dbReference>
<dbReference type="SUPFAM" id="SSF53756">
    <property type="entry name" value="UDP-Glycosyltransferase/glycogen phosphorylase"/>
    <property type="match status" value="1"/>
</dbReference>
<dbReference type="PROSITE" id="PS00375">
    <property type="entry name" value="UDPGT"/>
    <property type="match status" value="1"/>
</dbReference>
<gene>
    <name type="primary">UGT73C6</name>
    <name type="synonym">ZOG2</name>
    <name type="ordered locus">At2g36790</name>
    <name type="ORF">F13K3.19</name>
</gene>